<keyword id="KW-0106">Calcium</keyword>
<keyword id="KW-0130">Cell adhesion</keyword>
<keyword id="KW-1003">Cell membrane</keyword>
<keyword id="KW-0325">Glycoprotein</keyword>
<keyword id="KW-0472">Membrane</keyword>
<keyword id="KW-1267">Proteomics identification</keyword>
<keyword id="KW-1185">Reference proteome</keyword>
<keyword id="KW-0677">Repeat</keyword>
<keyword id="KW-0732">Signal</keyword>
<keyword id="KW-0812">Transmembrane</keyword>
<keyword id="KW-1133">Transmembrane helix</keyword>
<proteinExistence type="evidence at protein level"/>
<feature type="signal peptide" evidence="2">
    <location>
        <begin position="1"/>
        <end position="26"/>
    </location>
</feature>
<feature type="chain" id="PRO_0000003926" description="Protocadherin beta-7">
    <location>
        <begin position="27"/>
        <end position="793"/>
    </location>
</feature>
<feature type="topological domain" description="Extracellular" evidence="2">
    <location>
        <begin position="27"/>
        <end position="688"/>
    </location>
</feature>
<feature type="transmembrane region" description="Helical" evidence="2">
    <location>
        <begin position="689"/>
        <end position="709"/>
    </location>
</feature>
<feature type="topological domain" description="Cytoplasmic" evidence="2">
    <location>
        <begin position="710"/>
        <end position="793"/>
    </location>
</feature>
<feature type="domain" description="Cadherin 1" evidence="3">
    <location>
        <begin position="35"/>
        <end position="133"/>
    </location>
</feature>
<feature type="domain" description="Cadherin 2" evidence="3">
    <location>
        <begin position="138"/>
        <end position="242"/>
    </location>
</feature>
<feature type="domain" description="Cadherin 3" evidence="3">
    <location>
        <begin position="247"/>
        <end position="347"/>
    </location>
</feature>
<feature type="domain" description="Cadherin 4" evidence="3">
    <location>
        <begin position="352"/>
        <end position="451"/>
    </location>
</feature>
<feature type="domain" description="Cadherin 5" evidence="3">
    <location>
        <begin position="456"/>
        <end position="561"/>
    </location>
</feature>
<feature type="domain" description="Cadherin 6" evidence="3">
    <location>
        <begin position="568"/>
        <end position="671"/>
    </location>
</feature>
<feature type="glycosylation site" description="N-linked (GlcNAc...) asparagine" evidence="2">
    <location>
        <position position="169"/>
    </location>
</feature>
<feature type="glycosylation site" description="N-linked (GlcNAc...) asparagine" evidence="2">
    <location>
        <position position="418"/>
    </location>
</feature>
<feature type="glycosylation site" description="N-linked (GlcNAc...) asparagine" evidence="2">
    <location>
        <position position="436"/>
    </location>
</feature>
<feature type="glycosylation site" description="N-linked (GlcNAc...) asparagine" evidence="2">
    <location>
        <position position="567"/>
    </location>
</feature>
<feature type="sequence variant" id="VAR_033708" description="In dbSNP:rs17286891.">
    <original>E</original>
    <variation>K</variation>
    <location>
        <position position="120"/>
    </location>
</feature>
<feature type="sequence variant" id="VAR_033709" description="In dbSNP:rs17096946.">
    <original>E</original>
    <variation>K</variation>
    <location>
        <position position="187"/>
    </location>
</feature>
<feature type="sequence variant" id="VAR_020367" description="In dbSNP:rs2910313.">
    <original>V</original>
    <variation>L</variation>
    <location>
        <position position="389"/>
    </location>
</feature>
<feature type="sequence variant" id="VAR_059183" description="In dbSNP:rs13189280.">
    <original>P</original>
    <variation>L</variation>
    <location>
        <position position="575"/>
    </location>
</feature>
<feature type="sequence variant" id="VAR_059184" description="In dbSNP:rs13174866.">
    <original>L</original>
    <variation>V</variation>
    <location>
        <position position="576"/>
    </location>
</feature>
<feature type="sequence variant" id="VAR_059185" description="In dbSNP:rs2910314.">
    <original>R</original>
    <variation>W</variation>
    <location>
        <position position="716"/>
    </location>
</feature>
<evidence type="ECO:0000250" key="1"/>
<evidence type="ECO:0000255" key="2"/>
<evidence type="ECO:0000255" key="3">
    <source>
        <dbReference type="PROSITE-ProRule" id="PRU00043"/>
    </source>
</evidence>
<sequence>MEARVERAVQKRQVLFLCVFLGMSWAGAEPLRYFVAEETERGTFLTNLAKDLGLGVGELRARGTRIVSDQNMQILLLSSLTGDLLLNEKLDREELCGPREPCVLPFQLLLEKPFQIFRAELWVRDINDHAPVFLDREISLKILESTTPGAAFLLESAQDSDVGTNSLSNYTISPNAYFHINVHDSGEGNIYPELVLNQVLDREEIPEFSLTLTALDGGSPPRSGTALVRILVLDVNDNAPDFVRSLYKVQVPENSPVGSMVVSVSARDLDTGSNGEIAYAFSYATERILKTFQINPTSGSLHLKAQLDYEAIQTYTLTIQAKDGGGLSGKCTVVVDVTDINDNRPELLLSSLTSPIAENSPETVVAVFRIRDRDSGNNGKTVCSIQDDVPFILKPSVENFYTLVTEKPLDRERNTEYNITITVTDLGTPRLKTEHNITVLVSDVNDNAPAFTQTSYTLFVRENNSPALPIGSVSATDRDSGTNAQVIYSLLPSQDPHLPLASLVSINADNGHLFALRSLDYEALQAFEFRVGATDRGSPALSSEALVRVLVLDANDNSPFVLYPLQNSSAPCTEPLPRAAEPGYLVTKVVAVDGDSGQNAWLSYQLLKATEPGLFGVWAHNGEVRTARLLSERDAAKQRLVVLVKDNGEPPRSATATLHVLLVDGFSQPYLRLPEAAPDQANSLTVYLVVALASVSSLFLLSVLLFVAVRLCRRSRAAPVGRCSVPEGPFPRHLVDLSGTGTLSQSYQYEVCLTGGSGTNEFKFLKPIIPNLLPQSTGREVEENRPFQNNLGF</sequence>
<organism>
    <name type="scientific">Homo sapiens</name>
    <name type="common">Human</name>
    <dbReference type="NCBI Taxonomy" id="9606"/>
    <lineage>
        <taxon>Eukaryota</taxon>
        <taxon>Metazoa</taxon>
        <taxon>Chordata</taxon>
        <taxon>Craniata</taxon>
        <taxon>Vertebrata</taxon>
        <taxon>Euteleostomi</taxon>
        <taxon>Mammalia</taxon>
        <taxon>Eutheria</taxon>
        <taxon>Euarchontoglires</taxon>
        <taxon>Primates</taxon>
        <taxon>Haplorrhini</taxon>
        <taxon>Catarrhini</taxon>
        <taxon>Hominidae</taxon>
        <taxon>Homo</taxon>
    </lineage>
</organism>
<reference key="1">
    <citation type="journal article" date="1999" name="Cell">
        <title>A striking organization of a large family of human neural cadherin-like cell adhesion genes.</title>
        <authorList>
            <person name="Wu Q."/>
            <person name="Maniatis T."/>
        </authorList>
    </citation>
    <scope>NUCLEOTIDE SEQUENCE [MRNA]</scope>
</reference>
<reference key="2">
    <citation type="journal article" date="2001" name="FEBS Lett.">
        <title>The human and murine protocadherin-beta one-exon gene families show high evolutionary conservation, despite the difference in gene number.</title>
        <authorList>
            <person name="Vanhalst K."/>
            <person name="Kools P."/>
            <person name="Vanden Eynde E."/>
            <person name="van Roy F."/>
        </authorList>
    </citation>
    <scope>NUCLEOTIDE SEQUENCE [MRNA]</scope>
</reference>
<reference key="3">
    <citation type="journal article" date="2004" name="Nat. Genet.">
        <title>Complete sequencing and characterization of 21,243 full-length human cDNAs.</title>
        <authorList>
            <person name="Ota T."/>
            <person name="Suzuki Y."/>
            <person name="Nishikawa T."/>
            <person name="Otsuki T."/>
            <person name="Sugiyama T."/>
            <person name="Irie R."/>
            <person name="Wakamatsu A."/>
            <person name="Hayashi K."/>
            <person name="Sato H."/>
            <person name="Nagai K."/>
            <person name="Kimura K."/>
            <person name="Makita H."/>
            <person name="Sekine M."/>
            <person name="Obayashi M."/>
            <person name="Nishi T."/>
            <person name="Shibahara T."/>
            <person name="Tanaka T."/>
            <person name="Ishii S."/>
            <person name="Yamamoto J."/>
            <person name="Saito K."/>
            <person name="Kawai Y."/>
            <person name="Isono Y."/>
            <person name="Nakamura Y."/>
            <person name="Nagahari K."/>
            <person name="Murakami K."/>
            <person name="Yasuda T."/>
            <person name="Iwayanagi T."/>
            <person name="Wagatsuma M."/>
            <person name="Shiratori A."/>
            <person name="Sudo H."/>
            <person name="Hosoiri T."/>
            <person name="Kaku Y."/>
            <person name="Kodaira H."/>
            <person name="Kondo H."/>
            <person name="Sugawara M."/>
            <person name="Takahashi M."/>
            <person name="Kanda K."/>
            <person name="Yokoi T."/>
            <person name="Furuya T."/>
            <person name="Kikkawa E."/>
            <person name="Omura Y."/>
            <person name="Abe K."/>
            <person name="Kamihara K."/>
            <person name="Katsuta N."/>
            <person name="Sato K."/>
            <person name="Tanikawa M."/>
            <person name="Yamazaki M."/>
            <person name="Ninomiya K."/>
            <person name="Ishibashi T."/>
            <person name="Yamashita H."/>
            <person name="Murakawa K."/>
            <person name="Fujimori K."/>
            <person name="Tanai H."/>
            <person name="Kimata M."/>
            <person name="Watanabe M."/>
            <person name="Hiraoka S."/>
            <person name="Chiba Y."/>
            <person name="Ishida S."/>
            <person name="Ono Y."/>
            <person name="Takiguchi S."/>
            <person name="Watanabe S."/>
            <person name="Yosida M."/>
            <person name="Hotuta T."/>
            <person name="Kusano J."/>
            <person name="Kanehori K."/>
            <person name="Takahashi-Fujii A."/>
            <person name="Hara H."/>
            <person name="Tanase T.-O."/>
            <person name="Nomura Y."/>
            <person name="Togiya S."/>
            <person name="Komai F."/>
            <person name="Hara R."/>
            <person name="Takeuchi K."/>
            <person name="Arita M."/>
            <person name="Imose N."/>
            <person name="Musashino K."/>
            <person name="Yuuki H."/>
            <person name="Oshima A."/>
            <person name="Sasaki N."/>
            <person name="Aotsuka S."/>
            <person name="Yoshikawa Y."/>
            <person name="Matsunawa H."/>
            <person name="Ichihara T."/>
            <person name="Shiohata N."/>
            <person name="Sano S."/>
            <person name="Moriya S."/>
            <person name="Momiyama H."/>
            <person name="Satoh N."/>
            <person name="Takami S."/>
            <person name="Terashima Y."/>
            <person name="Suzuki O."/>
            <person name="Nakagawa S."/>
            <person name="Senoh A."/>
            <person name="Mizoguchi H."/>
            <person name="Goto Y."/>
            <person name="Shimizu F."/>
            <person name="Wakebe H."/>
            <person name="Hishigaki H."/>
            <person name="Watanabe T."/>
            <person name="Sugiyama A."/>
            <person name="Takemoto M."/>
            <person name="Kawakami B."/>
            <person name="Yamazaki M."/>
            <person name="Watanabe K."/>
            <person name="Kumagai A."/>
            <person name="Itakura S."/>
            <person name="Fukuzumi Y."/>
            <person name="Fujimori Y."/>
            <person name="Komiyama M."/>
            <person name="Tashiro H."/>
            <person name="Tanigami A."/>
            <person name="Fujiwara T."/>
            <person name="Ono T."/>
            <person name="Yamada K."/>
            <person name="Fujii Y."/>
            <person name="Ozaki K."/>
            <person name="Hirao M."/>
            <person name="Ohmori Y."/>
            <person name="Kawabata A."/>
            <person name="Hikiji T."/>
            <person name="Kobatake N."/>
            <person name="Inagaki H."/>
            <person name="Ikema Y."/>
            <person name="Okamoto S."/>
            <person name="Okitani R."/>
            <person name="Kawakami T."/>
            <person name="Noguchi S."/>
            <person name="Itoh T."/>
            <person name="Shigeta K."/>
            <person name="Senba T."/>
            <person name="Matsumura K."/>
            <person name="Nakajima Y."/>
            <person name="Mizuno T."/>
            <person name="Morinaga M."/>
            <person name="Sasaki M."/>
            <person name="Togashi T."/>
            <person name="Oyama M."/>
            <person name="Hata H."/>
            <person name="Watanabe M."/>
            <person name="Komatsu T."/>
            <person name="Mizushima-Sugano J."/>
            <person name="Satoh T."/>
            <person name="Shirai Y."/>
            <person name="Takahashi Y."/>
            <person name="Nakagawa K."/>
            <person name="Okumura K."/>
            <person name="Nagase T."/>
            <person name="Nomura N."/>
            <person name="Kikuchi H."/>
            <person name="Masuho Y."/>
            <person name="Yamashita R."/>
            <person name="Nakai K."/>
            <person name="Yada T."/>
            <person name="Nakamura Y."/>
            <person name="Ohara O."/>
            <person name="Isogai T."/>
            <person name="Sugano S."/>
        </authorList>
    </citation>
    <scope>NUCLEOTIDE SEQUENCE [LARGE SCALE MRNA]</scope>
    <source>
        <tissue>Testis</tissue>
    </source>
</reference>
<reference key="4">
    <citation type="submission" date="2005-09" db="EMBL/GenBank/DDBJ databases">
        <authorList>
            <person name="Mural R.J."/>
            <person name="Istrail S."/>
            <person name="Sutton G."/>
            <person name="Florea L."/>
            <person name="Halpern A.L."/>
            <person name="Mobarry C.M."/>
            <person name="Lippert R."/>
            <person name="Walenz B."/>
            <person name="Shatkay H."/>
            <person name="Dew I."/>
            <person name="Miller J.R."/>
            <person name="Flanigan M.J."/>
            <person name="Edwards N.J."/>
            <person name="Bolanos R."/>
            <person name="Fasulo D."/>
            <person name="Halldorsson B.V."/>
            <person name="Hannenhalli S."/>
            <person name="Turner R."/>
            <person name="Yooseph S."/>
            <person name="Lu F."/>
            <person name="Nusskern D.R."/>
            <person name="Shue B.C."/>
            <person name="Zheng X.H."/>
            <person name="Zhong F."/>
            <person name="Delcher A.L."/>
            <person name="Huson D.H."/>
            <person name="Kravitz S.A."/>
            <person name="Mouchard L."/>
            <person name="Reinert K."/>
            <person name="Remington K.A."/>
            <person name="Clark A.G."/>
            <person name="Waterman M.S."/>
            <person name="Eichler E.E."/>
            <person name="Adams M.D."/>
            <person name="Hunkapiller M.W."/>
            <person name="Myers E.W."/>
            <person name="Venter J.C."/>
        </authorList>
    </citation>
    <scope>NUCLEOTIDE SEQUENCE [LARGE SCALE GENOMIC DNA]</scope>
</reference>
<reference key="5">
    <citation type="journal article" date="2004" name="Genome Res.">
        <title>The status, quality, and expansion of the NIH full-length cDNA project: the Mammalian Gene Collection (MGC).</title>
        <authorList>
            <consortium name="The MGC Project Team"/>
        </authorList>
    </citation>
    <scope>NUCLEOTIDE SEQUENCE [LARGE SCALE MRNA]</scope>
    <source>
        <tissue>Brain</tissue>
    </source>
</reference>
<comment type="function">
    <text>Potential calcium-dependent cell-adhesion protein. May be involved in the establishment and maintenance of specific neuronal connections in the brain.</text>
</comment>
<comment type="subcellular location">
    <subcellularLocation>
        <location evidence="1">Cell membrane</location>
        <topology evidence="1">Single-pass type I membrane protein</topology>
    </subcellularLocation>
</comment>
<accession>Q9Y5E2</accession>
<accession>A1L3Y8</accession>
<name>PCDB7_HUMAN</name>
<gene>
    <name type="primary">PCDHB7</name>
</gene>
<protein>
    <recommendedName>
        <fullName>Protocadherin beta-7</fullName>
        <shortName>PCDH-beta-7</shortName>
    </recommendedName>
</protein>
<dbReference type="EMBL" id="AF152500">
    <property type="protein sequence ID" value="AAD43761.1"/>
    <property type="molecule type" value="mRNA"/>
</dbReference>
<dbReference type="EMBL" id="AF217750">
    <property type="protein sequence ID" value="AAK51617.1"/>
    <property type="molecule type" value="mRNA"/>
</dbReference>
<dbReference type="EMBL" id="AK315054">
    <property type="protein sequence ID" value="BAG37530.1"/>
    <property type="molecule type" value="mRNA"/>
</dbReference>
<dbReference type="EMBL" id="CH471062">
    <property type="protein sequence ID" value="EAW61977.1"/>
    <property type="molecule type" value="Genomic_DNA"/>
</dbReference>
<dbReference type="EMBL" id="BC130331">
    <property type="protein sequence ID" value="AAI30332.1"/>
    <property type="molecule type" value="mRNA"/>
</dbReference>
<dbReference type="CCDS" id="CCDS4249.1"/>
<dbReference type="RefSeq" id="NP_061763.1">
    <property type="nucleotide sequence ID" value="NM_018940.4"/>
</dbReference>
<dbReference type="SMR" id="Q9Y5E2"/>
<dbReference type="BioGRID" id="121069">
    <property type="interactions" value="54"/>
</dbReference>
<dbReference type="FunCoup" id="Q9Y5E2">
    <property type="interactions" value="39"/>
</dbReference>
<dbReference type="IntAct" id="Q9Y5E2">
    <property type="interactions" value="44"/>
</dbReference>
<dbReference type="STRING" id="9606.ENSP00000231137"/>
<dbReference type="GlyCosmos" id="Q9Y5E2">
    <property type="glycosylation" value="4 sites, No reported glycans"/>
</dbReference>
<dbReference type="GlyGen" id="Q9Y5E2">
    <property type="glycosylation" value="5 sites, 1 O-linked glycan (1 site)"/>
</dbReference>
<dbReference type="iPTMnet" id="Q9Y5E2"/>
<dbReference type="PhosphoSitePlus" id="Q9Y5E2"/>
<dbReference type="BioMuta" id="PCDHB7"/>
<dbReference type="DMDM" id="13431373"/>
<dbReference type="jPOST" id="Q9Y5E2"/>
<dbReference type="MassIVE" id="Q9Y5E2"/>
<dbReference type="PaxDb" id="9606-ENSP00000231137"/>
<dbReference type="PeptideAtlas" id="Q9Y5E2"/>
<dbReference type="Antibodypedia" id="27205">
    <property type="antibodies" value="45 antibodies from 11 providers"/>
</dbReference>
<dbReference type="DNASU" id="56129"/>
<dbReference type="Ensembl" id="ENST00000231137.6">
    <property type="protein sequence ID" value="ENSP00000231137.3"/>
    <property type="gene ID" value="ENSG00000113212.7"/>
</dbReference>
<dbReference type="Ensembl" id="ENST00000708364.1">
    <property type="protein sequence ID" value="ENSP00000517191.1"/>
    <property type="gene ID" value="ENSG00000291681.1"/>
</dbReference>
<dbReference type="GeneID" id="56129"/>
<dbReference type="KEGG" id="hsa:56129"/>
<dbReference type="MANE-Select" id="ENST00000231137.6">
    <property type="protein sequence ID" value="ENSP00000231137.3"/>
    <property type="RefSeq nucleotide sequence ID" value="NM_018940.4"/>
    <property type="RefSeq protein sequence ID" value="NP_061763.1"/>
</dbReference>
<dbReference type="UCSC" id="uc003lit.5">
    <property type="organism name" value="human"/>
</dbReference>
<dbReference type="AGR" id="HGNC:8692"/>
<dbReference type="CTD" id="56129"/>
<dbReference type="DisGeNET" id="56129"/>
<dbReference type="GeneCards" id="PCDHB7"/>
<dbReference type="HGNC" id="HGNC:8692">
    <property type="gene designation" value="PCDHB7"/>
</dbReference>
<dbReference type="HPA" id="ENSG00000113212">
    <property type="expression patterns" value="Low tissue specificity"/>
</dbReference>
<dbReference type="MIM" id="604967">
    <property type="type" value="gene"/>
</dbReference>
<dbReference type="MIM" id="606333">
    <property type="type" value="gene"/>
</dbReference>
<dbReference type="neXtProt" id="NX_Q9Y5E2"/>
<dbReference type="OpenTargets" id="ENSG00000113212"/>
<dbReference type="PharmGKB" id="PA33041"/>
<dbReference type="VEuPathDB" id="HostDB:ENSG00000113212"/>
<dbReference type="eggNOG" id="KOG3594">
    <property type="taxonomic scope" value="Eukaryota"/>
</dbReference>
<dbReference type="GeneTree" id="ENSGT00940000163469"/>
<dbReference type="HOGENOM" id="CLU_006480_3_0_1"/>
<dbReference type="InParanoid" id="Q9Y5E2"/>
<dbReference type="OMA" id="TACSIQD"/>
<dbReference type="OrthoDB" id="6252479at2759"/>
<dbReference type="PAN-GO" id="Q9Y5E2">
    <property type="GO annotations" value="2 GO annotations based on evolutionary models"/>
</dbReference>
<dbReference type="PhylomeDB" id="Q9Y5E2"/>
<dbReference type="TreeFam" id="TF332299"/>
<dbReference type="PathwayCommons" id="Q9Y5E2"/>
<dbReference type="SignaLink" id="Q9Y5E2"/>
<dbReference type="BioGRID-ORCS" id="56129">
    <property type="hits" value="11 hits in 1113 CRISPR screens"/>
</dbReference>
<dbReference type="ChiTaRS" id="PCDHB7">
    <property type="organism name" value="human"/>
</dbReference>
<dbReference type="GeneWiki" id="PCDHB7"/>
<dbReference type="GenomeRNAi" id="56129"/>
<dbReference type="Pharos" id="Q9Y5E2">
    <property type="development level" value="Tdark"/>
</dbReference>
<dbReference type="PRO" id="PR:Q9Y5E2"/>
<dbReference type="Proteomes" id="UP000005640">
    <property type="component" value="Chromosome 5"/>
</dbReference>
<dbReference type="RNAct" id="Q9Y5E2">
    <property type="molecule type" value="protein"/>
</dbReference>
<dbReference type="Bgee" id="ENSG00000113212">
    <property type="expression patterns" value="Expressed in visceral pleura and 115 other cell types or tissues"/>
</dbReference>
<dbReference type="GO" id="GO:0005886">
    <property type="term" value="C:plasma membrane"/>
    <property type="evidence" value="ECO:0000318"/>
    <property type="project" value="GO_Central"/>
</dbReference>
<dbReference type="GO" id="GO:0005509">
    <property type="term" value="F:calcium ion binding"/>
    <property type="evidence" value="ECO:0007669"/>
    <property type="project" value="InterPro"/>
</dbReference>
<dbReference type="GO" id="GO:0007155">
    <property type="term" value="P:cell adhesion"/>
    <property type="evidence" value="ECO:0000318"/>
    <property type="project" value="GO_Central"/>
</dbReference>
<dbReference type="GO" id="GO:0007156">
    <property type="term" value="P:homophilic cell adhesion via plasma membrane adhesion molecules"/>
    <property type="evidence" value="ECO:0007669"/>
    <property type="project" value="InterPro"/>
</dbReference>
<dbReference type="GO" id="GO:0007399">
    <property type="term" value="P:nervous system development"/>
    <property type="evidence" value="ECO:0007669"/>
    <property type="project" value="UniProtKB-ARBA"/>
</dbReference>
<dbReference type="CDD" id="cd11304">
    <property type="entry name" value="Cadherin_repeat"/>
    <property type="match status" value="5"/>
</dbReference>
<dbReference type="FunFam" id="2.60.40.60:FF:000001">
    <property type="entry name" value="Protocadherin alpha 2"/>
    <property type="match status" value="1"/>
</dbReference>
<dbReference type="FunFam" id="2.60.40.60:FF:000002">
    <property type="entry name" value="Protocadherin alpha 2"/>
    <property type="match status" value="1"/>
</dbReference>
<dbReference type="FunFam" id="2.60.40.60:FF:000006">
    <property type="entry name" value="Protocadherin alpha 2"/>
    <property type="match status" value="1"/>
</dbReference>
<dbReference type="FunFam" id="2.60.40.60:FF:000046">
    <property type="entry name" value="Protocadherin beta 5"/>
    <property type="match status" value="1"/>
</dbReference>
<dbReference type="FunFam" id="2.60.40.60:FF:000309">
    <property type="entry name" value="Protocadherin beta-8"/>
    <property type="match status" value="1"/>
</dbReference>
<dbReference type="FunFam" id="2.60.40.60:FF:000018">
    <property type="entry name" value="Protocadherin gamma c3"/>
    <property type="match status" value="1"/>
</dbReference>
<dbReference type="Gene3D" id="2.60.40.60">
    <property type="entry name" value="Cadherins"/>
    <property type="match status" value="6"/>
</dbReference>
<dbReference type="InterPro" id="IPR002126">
    <property type="entry name" value="Cadherin-like_dom"/>
</dbReference>
<dbReference type="InterPro" id="IPR015919">
    <property type="entry name" value="Cadherin-like_sf"/>
</dbReference>
<dbReference type="InterPro" id="IPR032455">
    <property type="entry name" value="Cadherin_C"/>
</dbReference>
<dbReference type="InterPro" id="IPR020894">
    <property type="entry name" value="Cadherin_CS"/>
</dbReference>
<dbReference type="InterPro" id="IPR013164">
    <property type="entry name" value="Cadherin_N"/>
</dbReference>
<dbReference type="InterPro" id="IPR050174">
    <property type="entry name" value="Protocadherin/Cadherin-CA"/>
</dbReference>
<dbReference type="PANTHER" id="PTHR24028">
    <property type="entry name" value="CADHERIN-87A"/>
    <property type="match status" value="1"/>
</dbReference>
<dbReference type="PANTHER" id="PTHR24028:SF69">
    <property type="entry name" value="PROTOCADHERIN BETA-7"/>
    <property type="match status" value="1"/>
</dbReference>
<dbReference type="Pfam" id="PF00028">
    <property type="entry name" value="Cadherin"/>
    <property type="match status" value="5"/>
</dbReference>
<dbReference type="Pfam" id="PF08266">
    <property type="entry name" value="Cadherin_2"/>
    <property type="match status" value="1"/>
</dbReference>
<dbReference type="Pfam" id="PF16492">
    <property type="entry name" value="Cadherin_C_2"/>
    <property type="match status" value="1"/>
</dbReference>
<dbReference type="PRINTS" id="PR00205">
    <property type="entry name" value="CADHERIN"/>
</dbReference>
<dbReference type="SMART" id="SM00112">
    <property type="entry name" value="CA"/>
    <property type="match status" value="5"/>
</dbReference>
<dbReference type="SUPFAM" id="SSF49313">
    <property type="entry name" value="Cadherin-like"/>
    <property type="match status" value="6"/>
</dbReference>
<dbReference type="PROSITE" id="PS00232">
    <property type="entry name" value="CADHERIN_1"/>
    <property type="match status" value="5"/>
</dbReference>
<dbReference type="PROSITE" id="PS50268">
    <property type="entry name" value="CADHERIN_2"/>
    <property type="match status" value="5"/>
</dbReference>